<proteinExistence type="inferred from homology"/>
<protein>
    <recommendedName>
        <fullName evidence="2">Probable 26S proteasome regulatory subunit rpn-6.2</fullName>
    </recommendedName>
</protein>
<keyword id="KW-0647">Proteasome</keyword>
<keyword id="KW-1185">Reference proteome</keyword>
<feature type="chain" id="PRO_0000399035" description="Probable 26S proteasome regulatory subunit rpn-6.2">
    <location>
        <begin position="1"/>
        <end position="411"/>
    </location>
</feature>
<feature type="domain" description="PCI" evidence="4">
    <location>
        <begin position="212"/>
        <end position="381"/>
    </location>
</feature>
<comment type="function">
    <text evidence="1">Component of the lid subcomplex of the 26S proteasome, a multiprotein complex involved in the ATP-dependent degradation of ubiquitinated proteins. In the complex, rpn-6.2 is required for proteasome assembly (By similarity).</text>
</comment>
<comment type="subunit">
    <text evidence="1">Component of the lid subcomplex of the 19S proteasome regulatory particle complex (also named PA700 complex). The 26S proteasome consists of a 20S proteasome core and two 19S regulatory subunits (By similarity).</text>
</comment>
<comment type="similarity">
    <text evidence="3">Belongs to the proteasome subunit S9 family.</text>
</comment>
<evidence type="ECO:0000250" key="1"/>
<evidence type="ECO:0000250" key="2">
    <source>
        <dbReference type="UniProtKB" id="P34481"/>
    </source>
</evidence>
<evidence type="ECO:0000255" key="3"/>
<evidence type="ECO:0000255" key="4">
    <source>
        <dbReference type="PROSITE-ProRule" id="PRU01185"/>
    </source>
</evidence>
<evidence type="ECO:0000312" key="5">
    <source>
        <dbReference type="EMBL" id="CAP27089.1"/>
    </source>
</evidence>
<gene>
    <name evidence="2" type="primary">rpn-6.2</name>
    <name type="ORF">CBG06851</name>
</gene>
<dbReference type="EMBL" id="HE601347">
    <property type="protein sequence ID" value="CAP27089.1"/>
    <property type="molecule type" value="Genomic_DNA"/>
</dbReference>
<dbReference type="SMR" id="A8X379"/>
<dbReference type="FunCoup" id="A8X379">
    <property type="interactions" value="46"/>
</dbReference>
<dbReference type="STRING" id="6238.A8X379"/>
<dbReference type="EnsemblMetazoa" id="CBG06851.1">
    <property type="protein sequence ID" value="CBG06851.1"/>
    <property type="gene ID" value="WBGene00029056"/>
</dbReference>
<dbReference type="KEGG" id="cbr:CBG_06851"/>
<dbReference type="CTD" id="8584440"/>
<dbReference type="WormBase" id="CBG06851">
    <property type="protein sequence ID" value="CBP07487"/>
    <property type="gene ID" value="WBGene00029056"/>
    <property type="gene designation" value="Cbr-rpn-6.2"/>
</dbReference>
<dbReference type="eggNOG" id="KOG1463">
    <property type="taxonomic scope" value="Eukaryota"/>
</dbReference>
<dbReference type="HOGENOM" id="CLU_029573_2_1_1"/>
<dbReference type="InParanoid" id="A8X379"/>
<dbReference type="OMA" id="MILCKIM"/>
<dbReference type="Proteomes" id="UP000008549">
    <property type="component" value="Unassembled WGS sequence"/>
</dbReference>
<dbReference type="GO" id="GO:0008541">
    <property type="term" value="C:proteasome regulatory particle, lid subcomplex"/>
    <property type="evidence" value="ECO:0000318"/>
    <property type="project" value="GO_Central"/>
</dbReference>
<dbReference type="GO" id="GO:0005198">
    <property type="term" value="F:structural molecule activity"/>
    <property type="evidence" value="ECO:0000318"/>
    <property type="project" value="GO_Central"/>
</dbReference>
<dbReference type="GO" id="GO:0006511">
    <property type="term" value="P:ubiquitin-dependent protein catabolic process"/>
    <property type="evidence" value="ECO:0000318"/>
    <property type="project" value="GO_Central"/>
</dbReference>
<dbReference type="FunFam" id="1.25.40.570:FF:000019">
    <property type="entry name" value="Proteasome regulatory non-ATPase subunit 6"/>
    <property type="match status" value="1"/>
</dbReference>
<dbReference type="Gene3D" id="1.25.40.570">
    <property type="match status" value="1"/>
</dbReference>
<dbReference type="InterPro" id="IPR050871">
    <property type="entry name" value="26S_Proteasome/COP9_Components"/>
</dbReference>
<dbReference type="InterPro" id="IPR000717">
    <property type="entry name" value="PCI_dom"/>
</dbReference>
<dbReference type="InterPro" id="IPR040773">
    <property type="entry name" value="Rpn6_N"/>
</dbReference>
<dbReference type="InterPro" id="IPR036390">
    <property type="entry name" value="WH_DNA-bd_sf"/>
</dbReference>
<dbReference type="PANTHER" id="PTHR10678">
    <property type="entry name" value="26S PROTEASOME NON-ATPASE REGULATORY SUBUNIT 11/COP9 SIGNALOSOME COMPLEX SUBUNIT 2"/>
    <property type="match status" value="1"/>
</dbReference>
<dbReference type="Pfam" id="PF01399">
    <property type="entry name" value="PCI"/>
    <property type="match status" value="1"/>
</dbReference>
<dbReference type="Pfam" id="PF18055">
    <property type="entry name" value="RPN6_N"/>
    <property type="match status" value="1"/>
</dbReference>
<dbReference type="SMART" id="SM00753">
    <property type="entry name" value="PAM"/>
    <property type="match status" value="1"/>
</dbReference>
<dbReference type="SMART" id="SM00088">
    <property type="entry name" value="PINT"/>
    <property type="match status" value="1"/>
</dbReference>
<dbReference type="SUPFAM" id="SSF46785">
    <property type="entry name" value="Winged helix' DNA-binding domain"/>
    <property type="match status" value="1"/>
</dbReference>
<dbReference type="PROSITE" id="PS50250">
    <property type="entry name" value="PCI"/>
    <property type="match status" value="1"/>
</dbReference>
<organism>
    <name type="scientific">Caenorhabditis briggsae</name>
    <dbReference type="NCBI Taxonomy" id="6238"/>
    <lineage>
        <taxon>Eukaryota</taxon>
        <taxon>Metazoa</taxon>
        <taxon>Ecdysozoa</taxon>
        <taxon>Nematoda</taxon>
        <taxon>Chromadorea</taxon>
        <taxon>Rhabditida</taxon>
        <taxon>Rhabditina</taxon>
        <taxon>Rhabditomorpha</taxon>
        <taxon>Rhabditoidea</taxon>
        <taxon>Rhabditidae</taxon>
        <taxon>Peloderinae</taxon>
        <taxon>Caenorhabditis</taxon>
    </lineage>
</organism>
<sequence>MSSTPVTLKAVQSEVSARNAKSSEAEVKRCEDLILSYAKQLAKEKDITGIRTLVKSIQNFYDLVGKARASKLIRDIVEFALTVEQGKQEKEEKIDLLKNCIEWATSNKREFLRRSLQARLVRLYNDVREFTEGQKLGQELSKELKKLEDRELLIEVSIEESKCAFNLNNLSKAKTALLTAKTSSNSAFASPQLQAAVDMQSGVLYSAEERDYKTSFSYFYEAFEGYGSIGDKVNATGALKYMILCKIMLNETEQIPAMLSTKEVLPYNTSPRIVAIRAMADAFRKRSLKDFMKALEEHKKELVEDKVVAVHSQNLERTMLEKEISRVIEPYSEIELSYIARVIGMTVPPTEKAIARMILDKKLMGSIDQHGDTVVIYPKAGATKQFTRALTTIRELTKTVDVSYSRTKVIK</sequence>
<name>PS11B_CAEBR</name>
<accession>A8X379</accession>
<reference evidence="5" key="1">
    <citation type="journal article" date="2003" name="PLoS Biol.">
        <title>The genome sequence of Caenorhabditis briggsae: a platform for comparative genomics.</title>
        <authorList>
            <person name="Stein L.D."/>
            <person name="Bao Z."/>
            <person name="Blasiar D."/>
            <person name="Blumenthal T."/>
            <person name="Brent M.R."/>
            <person name="Chen N."/>
            <person name="Chinwalla A."/>
            <person name="Clarke L."/>
            <person name="Clee C."/>
            <person name="Coghlan A."/>
            <person name="Coulson A."/>
            <person name="D'Eustachio P."/>
            <person name="Fitch D.H.A."/>
            <person name="Fulton L.A."/>
            <person name="Fulton R.E."/>
            <person name="Griffiths-Jones S."/>
            <person name="Harris T.W."/>
            <person name="Hillier L.W."/>
            <person name="Kamath R."/>
            <person name="Kuwabara P.E."/>
            <person name="Mardis E.R."/>
            <person name="Marra M.A."/>
            <person name="Miner T.L."/>
            <person name="Minx P."/>
            <person name="Mullikin J.C."/>
            <person name="Plumb R.W."/>
            <person name="Rogers J."/>
            <person name="Schein J.E."/>
            <person name="Sohrmann M."/>
            <person name="Spieth J."/>
            <person name="Stajich J.E."/>
            <person name="Wei C."/>
            <person name="Willey D."/>
            <person name="Wilson R.K."/>
            <person name="Durbin R.M."/>
            <person name="Waterston R.H."/>
        </authorList>
    </citation>
    <scope>NUCLEOTIDE SEQUENCE [LARGE SCALE GENOMIC DNA]</scope>
    <source>
        <strain>AF16</strain>
    </source>
</reference>